<sequence length="2430" mass="268843">MAPPAHKSILERSENVLMSPWKGKLIVQDRMLCDIALWSTYGAMIPTQLPQELDFKYVMKVSSLKKRLPEAAFRKQNYLEEKVCFQDLCFNLYEVELSNRQGENIDKLTECIKNKQLAIIKCLEDRGFFILLTSSALLSEPDFGGKQMGLHGLHLFRSPLSTGVKDLKVEDDISMKVIPILSTLNCALLETKKSLPEERIHPNTLVKRHFQELYKADRSPSLSVAPQDRMKDPTFLGKLPSGFDLIPPAEKCPSESLTQLNSYFSDPSAYILEVSTALDLLAEHPQSPCVSDGICDAGFSLVMTPDPEFLVSEAEVRKETETKKDSEEMLKAKKRVFPLSPASNLRVQPKRKASMPHMVQSKKVNLCRPFPKRTASRADNSSDSPTTLKLVKGQFPQKRKRGAEVLTAQFVQKTKLDRKNQEAPISKDVPVPTNAKRARKQEKSPVKTVPRAKPPVKKSPQKQRVNIVKGNENPRNRKQLQPVKGETASKLQSEISRGCQEDGISINSVQPENTTAAHNDLPENSIVNYDSQALNMLADLALSSATSSTPVSEARNLHCSSELPQNDVLLSKENSLRGTSDHEYHRGVKTQKGELLPNPSSDRKSNSGSDLTVSQDEESLVPCSQAPAKAQSALTEEMLESSDASQSSSVSVEHSYALLLTEHSKKHLQEREILSPLFPRNGTKSPEAATPVGKVMPFRHQPGLLLQQKPPDDPVVKPKDRPPSARVKKSSCSRIVLSCDDSVKITFKCETEYAFSLDSKYTNNPLEKTVVRALHGPWNTDLPDNVEEVKLLLHMWVALFYSNQNKIIRSSRKVVEHSNPAKYVSINSTLESCELREIEESLGLEKCSADSLLETNEISRAHAAEVSFRDPNCLLPFIKTPLTQGLELCVQNEQKKTFARECDPDTQEDQNFICSYNNEVTGEEAKQESLETSNLVLSGIGSTQTNGPSVPSEEEIVQPLDSTRVASYSGTVTQATFTRTYDGPGSQPVICQSSVYGTLENKVDILDAAVQTKTGTLQDLIQHGSPINNECHPSLERKDDNMGCAVINPEPITLTFEKNAHVPIQTEGVNTADERTTFKKELIKQVSPAASLRHPVSTSENARTQGLRDIPSLVVAGQKGTKYLCASSVGGETLDKAVCSLQKETPLPVSLPSDKTMVMEALSLAKSSSHLSPSEEVRCTQDFLSQTQSLLGLSSEGLLELTQVEVDSSSASTTLGRQCSLNCISSGCHTSGDSLELRKNHKNGPNTENMNLEAFDSVFIKQTSLSVSREVSLELSEEDSDIDLALTISPPTSPREEMPAGEIEQFEEAPFSNLELQDVAEEIGEPEEVALTESREVSSADNVSVYPSVSEEPVENKERKGDNLQPVTLILSKENCTLEIAEEINVTSDFPFDSVIEEVSPASSPEPPVPVKETRPYQAVTPCILKLHGTQCEKSNQISQCESEDLGITEKENVFVGPTHPVGQDNFTQVQQMQVSAEMPLILTDHPGRTGRPTLPGKVTEEIVSSEHDEGLSFSGKVQCYGRELNQPASAAKCTGDFSPSPEKLVKSGNPLQPVSIENRNLDLKHLVLESSEPPFGPRNVIENKSLSDTLVSTTAPSGIVNVSVKQQTSPKSSQNHLFPGDLKTDEGIYLQVKSLTAASVDGAYSTQGCMCSVVPTLCSSSDNATLTHYVRPINAEPVFQAQEIPAGRMASLLKNGEPEAELHKETTGPGTAGPQSNTTSSLKGERKAIHTLQDVSTCETKELLNVGVSSLCAGPYQNTADTKENLSKEPLASFVSESFDTSVCGIATEHVEIENSGEGLRAEAGSETLGRDGEVGVNSDMHYELSGDSDLDLLGDCRNPRLDLEDSYTLRGSYTRKKDVPTDGYESSLNFHNNNQEDWGCSSWVPGMETSLPPGHWTAAVKKEEKCVPPYVQIRDLHGILRTYANFSITKELKDTMRTSHGLRRHPSFSANCGLPSSWTSTWQVADDLTQNTLDLEYLRFAHKLKQTIKNGDSQHSASSANVFPKESPTQISIGAFPSTKISEAPFLHPAPRSRSPLLVTVVESDPRPQGQPRRGYTASSLDSSSSWRERCSHNRDLRNSQRNHTVSFHLNKLKYNSTVKESRNDISLILNEYAEFNKVMKNSNQFIFQDKELNDVSGEATAQEMYLPFPGRSASYEDIIIDVCTNLHVKLRSVVKEACKSTFLFYLVETEDKSFFVRTKNLLRKGGHTEIEPQHFCQAFHRENDTLIIIIRNEDISSHLHQIPSLLKLKHFPSVIFAGVDSPGDVLDHTYQELFRAGGFVISDDKILEAVTLVQLKEIIKILEKLNGNGRWKWLLHYRENKKLKEDERVDSTAHKKNIMLKSFQSANIIELLHYHQCDSRSSTKAEILKCLLNLQIQHIDARFAVLLTDKPTIPREVFENSGILVTDVNNFIENIEKIAAPFRSSYW</sequence>
<protein>
    <recommendedName>
        <fullName evidence="7">Protein TASOR 2</fullName>
    </recommendedName>
</protein>
<keyword id="KW-0025">Alternative splicing</keyword>
<keyword id="KW-1017">Isopeptide bond</keyword>
<keyword id="KW-0597">Phosphoprotein</keyword>
<keyword id="KW-1267">Proteomics identification</keyword>
<keyword id="KW-1185">Reference proteome</keyword>
<keyword id="KW-0832">Ubl conjugation</keyword>
<comment type="interaction">
    <interactant intactId="EBI-745958">
        <id>Q5VWN6</id>
    </interactant>
    <interactant intactId="EBI-8643161">
        <id>Q9NX04</id>
        <label>AIRIM</label>
    </interactant>
    <organismsDiffer>false</organismsDiffer>
    <experiments>4</experiments>
</comment>
<comment type="interaction">
    <interactant intactId="EBI-745958">
        <id>Q5VWN6</id>
    </interactant>
    <interactant intactId="EBI-742909">
        <id>Q9H6L4</id>
        <label>ARMC7</label>
    </interactant>
    <organismsDiffer>false</organismsDiffer>
    <experiments>3</experiments>
</comment>
<comment type="interaction">
    <interactant intactId="EBI-745958">
        <id>Q5VWN6</id>
    </interactant>
    <interactant intactId="EBI-11530605">
        <id>Q9H257-2</id>
        <label>CARD9</label>
    </interactant>
    <organismsDiffer>false</organismsDiffer>
    <experiments>3</experiments>
</comment>
<comment type="interaction">
    <interactant intactId="EBI-745958">
        <id>Q5VWN6</id>
    </interactant>
    <interactant intactId="EBI-749051">
        <id>Q8IYR0</id>
        <label>CFAP206</label>
    </interactant>
    <organismsDiffer>false</organismsDiffer>
    <experiments>3</experiments>
</comment>
<comment type="interaction">
    <interactant intactId="EBI-745958">
        <id>Q5VWN6</id>
    </interactant>
    <interactant intactId="EBI-1053725">
        <id>P10606</id>
        <label>COX5B</label>
    </interactant>
    <organismsDiffer>false</organismsDiffer>
    <experiments>4</experiments>
</comment>
<comment type="interaction">
    <interactant intactId="EBI-745958">
        <id>Q5VWN6</id>
    </interactant>
    <interactant intactId="EBI-11962928">
        <id>Q9UI47-2</id>
        <label>CTNNA3</label>
    </interactant>
    <organismsDiffer>false</organismsDiffer>
    <experiments>3</experiments>
</comment>
<comment type="interaction">
    <interactant intactId="EBI-745958">
        <id>Q5VWN6</id>
    </interactant>
    <interactant intactId="EBI-10976677">
        <id>G5E9A7</id>
        <label>DMWD</label>
    </interactant>
    <organismsDiffer>false</organismsDiffer>
    <experiments>3</experiments>
</comment>
<comment type="interaction">
    <interactant intactId="EBI-745958">
        <id>Q5VWN6</id>
    </interactant>
    <interactant intactId="EBI-711389">
        <id>P84090</id>
        <label>ERH</label>
    </interactant>
    <organismsDiffer>false</organismsDiffer>
    <experiments>8</experiments>
</comment>
<comment type="interaction">
    <interactant intactId="EBI-745958">
        <id>Q5VWN6</id>
    </interactant>
    <interactant intactId="EBI-744302">
        <id>P14136</id>
        <label>GFAP</label>
    </interactant>
    <organismsDiffer>false</organismsDiffer>
    <experiments>3</experiments>
</comment>
<comment type="interaction">
    <interactant intactId="EBI-745958">
        <id>Q5VWN6</id>
    </interactant>
    <interactant intactId="EBI-11519926">
        <id>Q6PI77</id>
        <label>GPRASP3</label>
    </interactant>
    <organismsDiffer>false</organismsDiffer>
    <experiments>3</experiments>
</comment>
<comment type="interaction">
    <interactant intactId="EBI-745958">
        <id>Q5VWN6</id>
    </interactant>
    <interactant intactId="EBI-10261098">
        <id>Q86YR5-3</id>
        <label>GPSM1</label>
    </interactant>
    <organismsDiffer>false</organismsDiffer>
    <experiments>3</experiments>
</comment>
<comment type="interaction">
    <interactant intactId="EBI-745958">
        <id>Q5VWN6</id>
    </interactant>
    <interactant intactId="EBI-747754">
        <id>P28799</id>
        <label>GRN</label>
    </interactant>
    <organismsDiffer>false</organismsDiffer>
    <experiments>3</experiments>
</comment>
<comment type="interaction">
    <interactant intactId="EBI-745958">
        <id>Q5VWN6</id>
    </interactant>
    <interactant intactId="EBI-16429135">
        <id>A0A0S2Z4Q4</id>
        <label>HGS</label>
    </interactant>
    <organismsDiffer>false</organismsDiffer>
    <experiments>3</experiments>
</comment>
<comment type="interaction">
    <interactant intactId="EBI-745958">
        <id>Q5VWN6</id>
    </interactant>
    <interactant intactId="EBI-7116203">
        <id>O75031</id>
        <label>HSF2BP</label>
    </interactant>
    <organismsDiffer>false</organismsDiffer>
    <experiments>3</experiments>
</comment>
<comment type="interaction">
    <interactant intactId="EBI-745958">
        <id>Q5VWN6</id>
    </interactant>
    <interactant intactId="EBI-352682">
        <id>P04792</id>
        <label>HSPB1</label>
    </interactant>
    <organismsDiffer>false</organismsDiffer>
    <experiments>3</experiments>
</comment>
<comment type="interaction">
    <interactant intactId="EBI-745958">
        <id>Q5VWN6</id>
    </interactant>
    <interactant intactId="EBI-517086">
        <id>O43464</id>
        <label>HTRA2</label>
    </interactant>
    <organismsDiffer>false</organismsDiffer>
    <experiments>3</experiments>
</comment>
<comment type="interaction">
    <interactant intactId="EBI-745958">
        <id>Q5VWN6</id>
    </interactant>
    <interactant intactId="EBI-466029">
        <id>P42858</id>
        <label>HTT</label>
    </interactant>
    <organismsDiffer>false</organismsDiffer>
    <experiments>12</experiments>
</comment>
<comment type="interaction">
    <interactant intactId="EBI-745958">
        <id>Q5VWN6</id>
    </interactant>
    <interactant intactId="EBI-2866589">
        <id>P14316</id>
        <label>IRF2</label>
    </interactant>
    <organismsDiffer>false</organismsDiffer>
    <experiments>3</experiments>
</comment>
<comment type="interaction">
    <interactant intactId="EBI-745958">
        <id>Q5VWN6</id>
    </interactant>
    <interactant intactId="EBI-1055254">
        <id>Q8WXH2</id>
        <label>JPH3</label>
    </interactant>
    <organismsDiffer>false</organismsDiffer>
    <experiments>3</experiments>
</comment>
<comment type="interaction">
    <interactant intactId="EBI-745958">
        <id>Q5VWN6</id>
    </interactant>
    <interactant intactId="EBI-4397613">
        <id>Q7L273</id>
        <label>KCTD9</label>
    </interactant>
    <organismsDiffer>false</organismsDiffer>
    <experiments>3</experiments>
</comment>
<comment type="interaction">
    <interactant intactId="EBI-745958">
        <id>Q5VWN6</id>
    </interactant>
    <interactant intactId="EBI-10975473">
        <id>O60333-2</id>
        <label>KIF1B</label>
    </interactant>
    <organismsDiffer>false</organismsDiffer>
    <experiments>3</experiments>
</comment>
<comment type="interaction">
    <interactant intactId="EBI-745958">
        <id>Q5VWN6</id>
    </interactant>
    <interactant intactId="EBI-14069005">
        <id>Q9BVG8-5</id>
        <label>KIFC3</label>
    </interactant>
    <organismsDiffer>false</organismsDiffer>
    <experiments>6</experiments>
</comment>
<comment type="interaction">
    <interactant intactId="EBI-745958">
        <id>Q5VWN6</id>
    </interactant>
    <interactant intactId="EBI-7851314">
        <id>Q2TBA0</id>
        <label>KLHL40</label>
    </interactant>
    <organismsDiffer>false</organismsDiffer>
    <experiments>3</experiments>
</comment>
<comment type="interaction">
    <interactant intactId="EBI-745958">
        <id>Q5VWN6</id>
    </interactant>
    <interactant intactId="EBI-2341787">
        <id>Q17RB8</id>
        <label>LONRF1</label>
    </interactant>
    <organismsDiffer>false</organismsDiffer>
    <experiments>3</experiments>
</comment>
<comment type="interaction">
    <interactant intactId="EBI-745958">
        <id>Q5VWN6</id>
    </interactant>
    <interactant intactId="EBI-724076">
        <id>Q99750</id>
        <label>MDFI</label>
    </interactant>
    <organismsDiffer>false</organismsDiffer>
    <experiments>3</experiments>
</comment>
<comment type="interaction">
    <interactant intactId="EBI-745958">
        <id>Q5VWN6</id>
    </interactant>
    <interactant intactId="EBI-16439278">
        <id>Q6FHY5</id>
        <label>MEOX2</label>
    </interactant>
    <organismsDiffer>false</organismsDiffer>
    <experiments>3</experiments>
</comment>
<comment type="interaction">
    <interactant intactId="EBI-745958">
        <id>Q5VWN6</id>
    </interactant>
    <interactant intactId="EBI-10172526">
        <id>Q9UJV3-2</id>
        <label>MID2</label>
    </interactant>
    <organismsDiffer>false</organismsDiffer>
    <experiments>3</experiments>
</comment>
<comment type="interaction">
    <interactant intactId="EBI-745958">
        <id>Q5VWN6</id>
    </interactant>
    <interactant intactId="EBI-2340269">
        <id>Q13064</id>
        <label>MKRN3</label>
    </interactant>
    <organismsDiffer>false</organismsDiffer>
    <experiments>3</experiments>
</comment>
<comment type="interaction">
    <interactant intactId="EBI-745958">
        <id>Q5VWN6</id>
    </interactant>
    <interactant intactId="EBI-744248">
        <id>P40692</id>
        <label>MLH1</label>
    </interactant>
    <organismsDiffer>false</organismsDiffer>
    <experiments>6</experiments>
</comment>
<comment type="interaction">
    <interactant intactId="EBI-745958">
        <id>Q5VWN6</id>
    </interactant>
    <interactant intactId="EBI-475646">
        <id>P07196</id>
        <label>NEFL</label>
    </interactant>
    <organismsDiffer>false</organismsDiffer>
    <experiments>3</experiments>
</comment>
<comment type="interaction">
    <interactant intactId="EBI-745958">
        <id>Q5VWN6</id>
    </interactant>
    <interactant intactId="EBI-11750983">
        <id>Q9HC98-4</id>
        <label>NEK6</label>
    </interactant>
    <organismsDiffer>false</organismsDiffer>
    <experiments>3</experiments>
</comment>
<comment type="interaction">
    <interactant intactId="EBI-745958">
        <id>Q5VWN6</id>
    </interactant>
    <interactant intactId="EBI-10694433">
        <id>Q8N7B6-2</id>
        <label>PACRGL</label>
    </interactant>
    <organismsDiffer>false</organismsDiffer>
    <experiments>3</experiments>
</comment>
<comment type="interaction">
    <interactant intactId="EBI-745958">
        <id>Q5VWN6</id>
    </interactant>
    <interactant intactId="EBI-10232538">
        <id>Q8WWB5</id>
        <label>PIH1D2</label>
    </interactant>
    <organismsDiffer>false</organismsDiffer>
    <experiments>5</experiments>
</comment>
<comment type="interaction">
    <interactant intactId="EBI-745958">
        <id>Q5VWN6</id>
    </interactant>
    <interactant intactId="EBI-79893">
        <id>Q92569</id>
        <label>PIK3R3</label>
    </interactant>
    <organismsDiffer>false</organismsDiffer>
    <experiments>5</experiments>
</comment>
<comment type="interaction">
    <interactant intactId="EBI-745958">
        <id>Q5VWN6</id>
    </interactant>
    <interactant intactId="EBI-302345">
        <id>Q8ND90</id>
        <label>PNMA1</label>
    </interactant>
    <organismsDiffer>false</organismsDiffer>
    <experiments>3</experiments>
</comment>
<comment type="interaction">
    <interactant intactId="EBI-745958">
        <id>Q5VWN6</id>
    </interactant>
    <interactant intactId="EBI-2805516">
        <id>P31321</id>
        <label>PRKAR1B</label>
    </interactant>
    <organismsDiffer>false</organismsDiffer>
    <experiments>3</experiments>
</comment>
<comment type="interaction">
    <interactant intactId="EBI-745958">
        <id>Q5VWN6</id>
    </interactant>
    <interactant intactId="EBI-749195">
        <id>P60891</id>
        <label>PRPS1</label>
    </interactant>
    <organismsDiffer>false</organismsDiffer>
    <experiments>3</experiments>
</comment>
<comment type="interaction">
    <interactant intactId="EBI-745958">
        <id>Q5VWN6</id>
    </interactant>
    <interactant intactId="EBI-712376">
        <id>P40937</id>
        <label>RFC5</label>
    </interactant>
    <organismsDiffer>false</organismsDiffer>
    <experiments>3</experiments>
</comment>
<comment type="interaction">
    <interactant intactId="EBI-745958">
        <id>Q5VWN6</id>
    </interactant>
    <interactant intactId="EBI-396669">
        <id>Q9Y3C5</id>
        <label>RNF11</label>
    </interactant>
    <organismsDiffer>false</organismsDiffer>
    <experiments>3</experiments>
</comment>
<comment type="interaction">
    <interactant intactId="EBI-745958">
        <id>Q5VWN6</id>
    </interactant>
    <interactant intactId="EBI-748621">
        <id>Q9UJW9</id>
        <label>SERTAD3</label>
    </interactant>
    <organismsDiffer>false</organismsDiffer>
    <experiments>3</experiments>
</comment>
<comment type="interaction">
    <interactant intactId="EBI-745958">
        <id>Q5VWN6</id>
    </interactant>
    <interactant intactId="EBI-5235340">
        <id>Q7Z699</id>
        <label>SPRED1</label>
    </interactant>
    <organismsDiffer>false</organismsDiffer>
    <experiments>3</experiments>
</comment>
<comment type="interaction">
    <interactant intactId="EBI-745958">
        <id>Q5VWN6</id>
    </interactant>
    <interactant intactId="EBI-372899">
        <id>Q13148</id>
        <label>TARDBP</label>
    </interactant>
    <organismsDiffer>false</organismsDiffer>
    <experiments>6</experiments>
</comment>
<comment type="interaction">
    <interactant intactId="EBI-745958">
        <id>Q5VWN6</id>
    </interactant>
    <interactant intactId="EBI-10259086">
        <id>Q86UV6-2</id>
        <label>TRIM74</label>
    </interactant>
    <organismsDiffer>false</organismsDiffer>
    <experiments>3</experiments>
</comment>
<comment type="interaction">
    <interactant intactId="EBI-745958">
        <id>Q5VWN6</id>
    </interactant>
    <interactant intactId="EBI-372432">
        <id>Q8WW01</id>
        <label>TSEN15</label>
    </interactant>
    <organismsDiffer>false</organismsDiffer>
    <experiments>3</experiments>
</comment>
<comment type="interaction">
    <interactant intactId="EBI-745958">
        <id>Q5VWN6</id>
    </interactant>
    <interactant intactId="EBI-739895">
        <id>Q8N6Y0</id>
        <label>USHBP1</label>
    </interactant>
    <organismsDiffer>false</organismsDiffer>
    <experiments>3</experiments>
</comment>
<comment type="interaction">
    <interactant intactId="EBI-745958">
        <id>Q5VWN6</id>
    </interactant>
    <interactant intactId="EBI-3913354">
        <id>P98182</id>
        <label>ZNF200</label>
    </interactant>
    <organismsDiffer>false</organismsDiffer>
    <experiments>3</experiments>
</comment>
<comment type="interaction">
    <interactant intactId="EBI-745958">
        <id>Q5VWN6</id>
    </interactant>
    <interactant intactId="EBI-7254550">
        <id>P36508</id>
        <label>ZNF76</label>
    </interactant>
    <organismsDiffer>false</organismsDiffer>
    <experiments>3</experiments>
</comment>
<comment type="interaction">
    <interactant intactId="EBI-10172380">
        <id>Q5VWN6-2</id>
    </interactant>
    <interactant intactId="EBI-747353">
        <id>Q8WXE1</id>
        <label>ATRIP</label>
    </interactant>
    <organismsDiffer>false</organismsDiffer>
    <experiments>3</experiments>
</comment>
<comment type="interaction">
    <interactant intactId="EBI-10172380">
        <id>Q5VWN6-2</id>
    </interactant>
    <interactant intactId="EBI-751319">
        <id>Q9H257</id>
        <label>CARD9</label>
    </interactant>
    <organismsDiffer>false</organismsDiffer>
    <experiments>3</experiments>
</comment>
<comment type="interaction">
    <interactant intactId="EBI-10172380">
        <id>Q5VWN6-2</id>
    </interactant>
    <interactant intactId="EBI-711389">
        <id>P84090</id>
        <label>ERH</label>
    </interactant>
    <organismsDiffer>false</organismsDiffer>
    <experiments>3</experiments>
</comment>
<comment type="interaction">
    <interactant intactId="EBI-10172380">
        <id>Q5VWN6-2</id>
    </interactant>
    <interactant intactId="EBI-10244131">
        <id>Q8TES7-6</id>
        <label>FBF1</label>
    </interactant>
    <organismsDiffer>false</organismsDiffer>
    <experiments>3</experiments>
</comment>
<comment type="interaction">
    <interactant intactId="EBI-10172380">
        <id>Q5VWN6-2</id>
    </interactant>
    <interactant intactId="EBI-4397613">
        <id>Q7L273</id>
        <label>KCTD9</label>
    </interactant>
    <organismsDiffer>false</organismsDiffer>
    <experiments>3</experiments>
</comment>
<comment type="interaction">
    <interactant intactId="EBI-10172380">
        <id>Q5VWN6-2</id>
    </interactant>
    <interactant intactId="EBI-740738">
        <id>O95751</id>
        <label>LDOC1</label>
    </interactant>
    <organismsDiffer>false</organismsDiffer>
    <experiments>3</experiments>
</comment>
<comment type="interaction">
    <interactant intactId="EBI-10172380">
        <id>Q5VWN6-2</id>
    </interactant>
    <interactant intactId="EBI-8639312">
        <id>P25800</id>
        <label>LMO1</label>
    </interactant>
    <organismsDiffer>false</organismsDiffer>
    <experiments>3</experiments>
</comment>
<comment type="interaction">
    <interactant intactId="EBI-10172380">
        <id>Q5VWN6-2</id>
    </interactant>
    <interactant intactId="EBI-9675802">
        <id>Q6PF18</id>
        <label>MORN3</label>
    </interactant>
    <organismsDiffer>false</organismsDiffer>
    <experiments>3</experiments>
</comment>
<comment type="interaction">
    <interactant intactId="EBI-10172380">
        <id>Q5VWN6-2</id>
    </interactant>
    <interactant intactId="EBI-740364">
        <id>Q9HC98</id>
        <label>NEK6</label>
    </interactant>
    <organismsDiffer>false</organismsDiffer>
    <experiments>3</experiments>
</comment>
<comment type="interaction">
    <interactant intactId="EBI-10172380">
        <id>Q5VWN6-2</id>
    </interactant>
    <interactant intactId="EBI-1055079">
        <id>O15160</id>
        <label>POLR1C</label>
    </interactant>
    <organismsDiffer>false</organismsDiffer>
    <experiments>3</experiments>
</comment>
<comment type="interaction">
    <interactant intactId="EBI-10172380">
        <id>Q5VWN6-2</id>
    </interactant>
    <interactant intactId="EBI-10293968">
        <id>Q96T49</id>
        <label>PPP1R16B</label>
    </interactant>
    <organismsDiffer>false</organismsDiffer>
    <experiments>3</experiments>
</comment>
<comment type="interaction">
    <interactant intactId="EBI-10172380">
        <id>Q5VWN6-2</id>
    </interactant>
    <interactant intactId="EBI-1053424">
        <id>O43741</id>
        <label>PRKAB2</label>
    </interactant>
    <organismsDiffer>false</organismsDiffer>
    <experiments>3</experiments>
</comment>
<comment type="interaction">
    <interactant intactId="EBI-10172380">
        <id>Q5VWN6-2</id>
    </interactant>
    <interactant intactId="EBI-954338">
        <id>O15126</id>
        <label>SCAMP1</label>
    </interactant>
    <organismsDiffer>false</organismsDiffer>
    <experiments>3</experiments>
</comment>
<comment type="interaction">
    <interactant intactId="EBI-10172380">
        <id>Q5VWN6-2</id>
    </interactant>
    <interactant intactId="EBI-740098">
        <id>P36406</id>
        <label>TRIM23</label>
    </interactant>
    <organismsDiffer>false</organismsDiffer>
    <experiments>3</experiments>
</comment>
<comment type="interaction">
    <interactant intactId="EBI-10172380">
        <id>Q5VWN6-2</id>
    </interactant>
    <interactant intactId="EBI-5235829">
        <id>Q8IWZ5</id>
        <label>TRIM42</label>
    </interactant>
    <organismsDiffer>false</organismsDiffer>
    <experiments>3</experiments>
</comment>
<comment type="interaction">
    <interactant intactId="EBI-10172380">
        <id>Q5VWN6-2</id>
    </interactant>
    <interactant intactId="EBI-10174421">
        <id>A8K5H9</id>
    </interactant>
    <organismsDiffer>false</organismsDiffer>
    <experiments>3</experiments>
</comment>
<comment type="interaction">
    <interactant intactId="EBI-10172380">
        <id>Q5VWN6-2</id>
    </interactant>
    <interactant intactId="EBI-10266435">
        <id>Q8N5D4</id>
    </interactant>
    <organismsDiffer>false</organismsDiffer>
    <experiments>3</experiments>
</comment>
<comment type="alternative products">
    <event type="alternative splicing"/>
    <isoform>
        <id>Q5VWN6-1</id>
        <name>1</name>
        <sequence type="displayed"/>
    </isoform>
    <isoform>
        <id>Q5VWN6-2</id>
        <name>2</name>
        <sequence type="described" ref="VSP_027733"/>
    </isoform>
</comment>
<comment type="similarity">
    <text evidence="7">Belongs to the TASOR family.</text>
</comment>
<comment type="sequence caution" evidence="7">
    <conflict type="erroneous initiation">
        <sequence resource="EMBL-CDS" id="BAA91115"/>
    </conflict>
    <text>Truncated N-terminus.</text>
</comment>
<comment type="sequence caution" evidence="7">
    <conflict type="erroneous initiation">
        <sequence resource="EMBL-CDS" id="BAB14336"/>
    </conflict>
    <text>Truncated N-terminus.</text>
</comment>
<comment type="sequence caution" evidence="7">
    <conflict type="erroneous initiation">
        <sequence resource="EMBL-CDS" id="BAB14993"/>
    </conflict>
    <text>Truncated N-terminus.</text>
</comment>
<comment type="sequence caution" evidence="7">
    <conflict type="erroneous initiation">
        <sequence resource="EMBL-CDS" id="BAC87251"/>
    </conflict>
    <text>Truncated N-terminus.</text>
</comment>
<feature type="chain" id="PRO_0000299542" description="Protein TASOR 2">
    <location>
        <begin position="1"/>
        <end position="2430"/>
    </location>
</feature>
<feature type="region of interest" description="Disordered" evidence="2">
    <location>
        <begin position="416"/>
        <end position="488"/>
    </location>
</feature>
<feature type="region of interest" description="Disordered" evidence="2">
    <location>
        <begin position="577"/>
        <end position="648"/>
    </location>
</feature>
<feature type="region of interest" description="Disordered" evidence="2">
    <location>
        <begin position="704"/>
        <end position="727"/>
    </location>
</feature>
<feature type="region of interest" description="Disordered" evidence="2">
    <location>
        <begin position="1331"/>
        <end position="1360"/>
    </location>
</feature>
<feature type="region of interest" description="Disordered" evidence="2">
    <location>
        <begin position="1700"/>
        <end position="1727"/>
    </location>
</feature>
<feature type="region of interest" description="Disordered" evidence="2">
    <location>
        <begin position="2046"/>
        <end position="2069"/>
    </location>
</feature>
<feature type="compositionally biased region" description="Basic and acidic residues" evidence="2">
    <location>
        <begin position="710"/>
        <end position="723"/>
    </location>
</feature>
<feature type="compositionally biased region" description="Polar residues" evidence="2">
    <location>
        <begin position="1714"/>
        <end position="1723"/>
    </location>
</feature>
<feature type="modified residue" description="Phosphoserine" evidence="10">
    <location>
        <position position="19"/>
    </location>
</feature>
<feature type="modified residue" description="Phosphoserine" evidence="11">
    <location>
        <position position="219"/>
    </location>
</feature>
<feature type="modified residue" description="Phosphoserine" evidence="9">
    <location>
        <position position="384"/>
    </location>
</feature>
<feature type="modified residue" description="Phosphoserine" evidence="11">
    <location>
        <position position="685"/>
    </location>
</feature>
<feature type="modified residue" description="Phosphoserine" evidence="12">
    <location>
        <position position="1025"/>
    </location>
</feature>
<feature type="modified residue" description="Phosphoserine" evidence="10 11">
    <location>
        <position position="1087"/>
    </location>
</feature>
<feature type="modified residue" description="Phosphoserine" evidence="11">
    <location>
        <position position="1172"/>
    </location>
</feature>
<feature type="modified residue" description="Phosphoserine" evidence="11">
    <location>
        <position position="1541"/>
    </location>
</feature>
<feature type="modified residue" description="Phosphoserine" evidence="11">
    <location>
        <position position="1848"/>
    </location>
</feature>
<feature type="modified residue" description="Phosphoserine" evidence="10 11">
    <location>
        <position position="2009"/>
    </location>
</feature>
<feature type="modified residue" description="Phosphoserine" evidence="9 11">
    <location>
        <position position="2037"/>
    </location>
</feature>
<feature type="modified residue" description="Phosphoserine" evidence="1">
    <location>
        <position position="2062"/>
    </location>
</feature>
<feature type="modified residue" description="Phosphoserine" evidence="11">
    <location>
        <position position="2066"/>
    </location>
</feature>
<feature type="cross-link" description="Glycyl lysine isopeptide (Lys-Gly) (interchain with G-Cter in SUMO2)" evidence="13">
    <location>
        <position position="2007"/>
    </location>
</feature>
<feature type="splice variant" id="VSP_027733" description="In isoform 2." evidence="6">
    <location>
        <begin position="333"/>
        <end position="1137"/>
    </location>
</feature>
<feature type="sequence variant" id="VAR_050848" description="In dbSNP:rs2254067.">
    <original>C</original>
    <variation>G</variation>
    <location>
        <position position="499"/>
    </location>
</feature>
<feature type="sequence variant" id="VAR_050849" description="In dbSNP:rs4748636.">
    <original>A</original>
    <variation>D</variation>
    <location>
        <position position="630"/>
    </location>
</feature>
<feature type="sequence variant" id="VAR_061601" description="In dbSNP:rs56856085.">
    <original>S</original>
    <variation>Y</variation>
    <location>
        <position position="724"/>
    </location>
</feature>
<feature type="sequence variant" id="VAR_061602" description="In dbSNP:rs45575338.">
    <original>I</original>
    <variation>V</variation>
    <location>
        <position position="807"/>
    </location>
</feature>
<feature type="sequence variant" id="VAR_034838" description="In dbSNP:rs2797491." evidence="5">
    <original>R</original>
    <variation>P</variation>
    <location>
        <position position="1075"/>
    </location>
</feature>
<feature type="sequence variant" id="VAR_050850" description="In dbSNP:rs3814196.">
    <original>V</original>
    <variation>M</variation>
    <location>
        <position position="1206"/>
    </location>
</feature>
<feature type="sequence variant" id="VAR_050851" description="In dbSNP:rs17143175.">
    <original>P</original>
    <variation>S</variation>
    <location>
        <position position="1578"/>
    </location>
</feature>
<feature type="sequence variant" id="VAR_034839" description="In dbSNP:rs2669142." evidence="3 4 5">
    <original>V</original>
    <variation>A</variation>
    <location>
        <position position="1679"/>
    </location>
</feature>
<feature type="sequence variant" id="VAR_050852" description="In dbSNP:rs11593253.">
    <original>T</original>
    <variation>I</variation>
    <location>
        <position position="1782"/>
    </location>
</feature>
<feature type="sequence variant" id="VAR_050853" description="In dbSNP:rs2275774.">
    <original>K</original>
    <variation>R</variation>
    <location>
        <position position="2288"/>
    </location>
</feature>
<feature type="sequence variant" id="VAR_034840" description="In dbSNP:rs2797501." evidence="3 4 5">
    <original>S</original>
    <variation>N</variation>
    <location>
        <position position="2404"/>
    </location>
</feature>
<feature type="sequence conflict" description="In Ref. 3; BAA91115." evidence="7" ref="3">
    <original>W</original>
    <variation>R</variation>
    <location>
        <position position="1885"/>
    </location>
</feature>
<feature type="sequence conflict" description="In Ref. 3; BAA91115." evidence="7" ref="3">
    <original>V</original>
    <variation>A</variation>
    <location>
        <position position="2043"/>
    </location>
</feature>
<feature type="sequence conflict" description="In Ref. 3; BAA91115." evidence="7" ref="3">
    <original>S</original>
    <variation>I</variation>
    <location>
        <position position="2065"/>
    </location>
</feature>
<feature type="sequence conflict" description="In Ref. 3; BAB14993." evidence="7" ref="3">
    <original>Q</original>
    <variation>R</variation>
    <location>
        <position position="2359"/>
    </location>
</feature>
<feature type="sequence conflict" description="In Ref. 3; BAB14993." evidence="7" ref="3">
    <original>A</original>
    <variation>T</variation>
    <location>
        <position position="2384"/>
    </location>
</feature>
<gene>
    <name evidence="8" type="primary">TASOR2</name>
    <name type="synonym">C10orf18</name>
    <name type="synonym">FAM208B</name>
    <name type="synonym">KIAA2006</name>
</gene>
<name>TASO2_HUMAN</name>
<dbReference type="EMBL" id="AL365356">
    <property type="status" value="NOT_ANNOTATED_CDS"/>
    <property type="molecule type" value="Genomic_DNA"/>
</dbReference>
<dbReference type="EMBL" id="AL596094">
    <property type="status" value="NOT_ANNOTATED_CDS"/>
    <property type="molecule type" value="Genomic_DNA"/>
</dbReference>
<dbReference type="EMBL" id="AB095927">
    <property type="protein sequence ID" value="BAC23103.1"/>
    <property type="molecule type" value="mRNA"/>
</dbReference>
<dbReference type="EMBL" id="AK000367">
    <property type="protein sequence ID" value="BAA91115.1"/>
    <property type="status" value="ALT_INIT"/>
    <property type="molecule type" value="mRNA"/>
</dbReference>
<dbReference type="EMBL" id="AK022966">
    <property type="protein sequence ID" value="BAB14336.1"/>
    <property type="status" value="ALT_INIT"/>
    <property type="molecule type" value="mRNA"/>
</dbReference>
<dbReference type="EMBL" id="AK024762">
    <property type="protein sequence ID" value="BAB14993.1"/>
    <property type="status" value="ALT_INIT"/>
    <property type="molecule type" value="mRNA"/>
</dbReference>
<dbReference type="EMBL" id="AK027014">
    <property type="protein sequence ID" value="BAB15627.1"/>
    <property type="molecule type" value="mRNA"/>
</dbReference>
<dbReference type="EMBL" id="AK128051">
    <property type="protein sequence ID" value="BAC87251.1"/>
    <property type="status" value="ALT_INIT"/>
    <property type="molecule type" value="mRNA"/>
</dbReference>
<dbReference type="EMBL" id="BC001759">
    <property type="protein sequence ID" value="AAH01759.2"/>
    <property type="molecule type" value="mRNA"/>
</dbReference>
<dbReference type="EMBL" id="BC110339">
    <property type="protein sequence ID" value="AAI10340.1"/>
    <property type="molecule type" value="mRNA"/>
</dbReference>
<dbReference type="CCDS" id="CCDS41485.1">
    <molecule id="Q5VWN6-1"/>
</dbReference>
<dbReference type="RefSeq" id="NP_001308712.2">
    <molecule id="Q5VWN6-1"/>
    <property type="nucleotide sequence ID" value="NM_001321783.2"/>
</dbReference>
<dbReference type="RefSeq" id="NP_001308713.2">
    <molecule id="Q5VWN6-1"/>
    <property type="nucleotide sequence ID" value="NM_001321784.2"/>
</dbReference>
<dbReference type="RefSeq" id="NP_001308714.1">
    <property type="nucleotide sequence ID" value="NM_001321785.1"/>
</dbReference>
<dbReference type="RefSeq" id="NP_060252.4">
    <molecule id="Q5VWN6-1"/>
    <property type="nucleotide sequence ID" value="NM_017782.4"/>
</dbReference>
<dbReference type="RefSeq" id="XP_005252532.1">
    <property type="nucleotide sequence ID" value="XM_005252475.3"/>
</dbReference>
<dbReference type="RefSeq" id="XP_005252537.1">
    <property type="nucleotide sequence ID" value="XM_005252480.4"/>
</dbReference>
<dbReference type="RefSeq" id="XP_005252538.1">
    <property type="nucleotide sequence ID" value="XM_005252481.4"/>
</dbReference>
<dbReference type="RefSeq" id="XP_005252539.1">
    <property type="nucleotide sequence ID" value="XM_005252482.2"/>
</dbReference>
<dbReference type="RefSeq" id="XP_011517827.1">
    <property type="nucleotide sequence ID" value="XM_011519525.2"/>
</dbReference>
<dbReference type="RefSeq" id="XP_016871852.1">
    <property type="nucleotide sequence ID" value="XM_017016363.1"/>
</dbReference>
<dbReference type="RefSeq" id="XP_016871854.1">
    <property type="nucleotide sequence ID" value="XM_017016365.1"/>
</dbReference>
<dbReference type="BioGRID" id="120252">
    <property type="interactions" value="108"/>
</dbReference>
<dbReference type="FunCoup" id="Q5VWN6">
    <property type="interactions" value="3369"/>
</dbReference>
<dbReference type="IntAct" id="Q5VWN6">
    <property type="interactions" value="118"/>
</dbReference>
<dbReference type="MINT" id="Q5VWN6"/>
<dbReference type="STRING" id="9606.ENSP00000328426"/>
<dbReference type="GlyCosmos" id="Q5VWN6">
    <property type="glycosylation" value="6 sites, 2 glycans"/>
</dbReference>
<dbReference type="GlyGen" id="Q5VWN6">
    <property type="glycosylation" value="20 sites, 2 O-linked glycans (19 sites)"/>
</dbReference>
<dbReference type="iPTMnet" id="Q5VWN6"/>
<dbReference type="PhosphoSitePlus" id="Q5VWN6"/>
<dbReference type="SwissPalm" id="Q5VWN6"/>
<dbReference type="BioMuta" id="FAM208B"/>
<dbReference type="DMDM" id="74747424"/>
<dbReference type="jPOST" id="Q5VWN6"/>
<dbReference type="MassIVE" id="Q5VWN6"/>
<dbReference type="PaxDb" id="9606-ENSP00000328426"/>
<dbReference type="PeptideAtlas" id="Q5VWN6"/>
<dbReference type="ProteomicsDB" id="65545">
    <molecule id="Q5VWN6-1"/>
</dbReference>
<dbReference type="ProteomicsDB" id="65546">
    <molecule id="Q5VWN6-2"/>
</dbReference>
<dbReference type="Pumba" id="Q5VWN6"/>
<dbReference type="Antibodypedia" id="51208">
    <property type="antibodies" value="23 antibodies from 9 providers"/>
</dbReference>
<dbReference type="DNASU" id="54906"/>
<dbReference type="Ensembl" id="ENST00000328090.9">
    <molecule id="Q5VWN6-1"/>
    <property type="protein sequence ID" value="ENSP00000328426.5"/>
    <property type="gene ID" value="ENSG00000108021.22"/>
</dbReference>
<dbReference type="Ensembl" id="ENST00000695737.1">
    <molecule id="Q5VWN6-1"/>
    <property type="protein sequence ID" value="ENSP00000512130.1"/>
    <property type="gene ID" value="ENSG00000108021.22"/>
</dbReference>
<dbReference type="Ensembl" id="ENST00000695834.1">
    <molecule id="Q5VWN6-1"/>
    <property type="protein sequence ID" value="ENSP00000512207.1"/>
    <property type="gene ID" value="ENSG00000108021.22"/>
</dbReference>
<dbReference type="GeneID" id="54906"/>
<dbReference type="KEGG" id="hsa:54906"/>
<dbReference type="MANE-Select" id="ENST00000695737.1">
    <property type="protein sequence ID" value="ENSP00000512130.1"/>
    <property type="RefSeq nucleotide sequence ID" value="NM_001321783.2"/>
    <property type="RefSeq protein sequence ID" value="NP_001308712.2"/>
</dbReference>
<dbReference type="UCSC" id="uc001iij.3">
    <molecule id="Q5VWN6-1"/>
    <property type="organism name" value="human"/>
</dbReference>
<dbReference type="AGR" id="HGNC:23484"/>
<dbReference type="CTD" id="54906"/>
<dbReference type="DisGeNET" id="54906"/>
<dbReference type="GeneCards" id="TASOR2"/>
<dbReference type="HGNC" id="HGNC:23484">
    <property type="gene designation" value="TASOR2"/>
</dbReference>
<dbReference type="HPA" id="ENSG00000108021">
    <property type="expression patterns" value="Low tissue specificity"/>
</dbReference>
<dbReference type="neXtProt" id="NX_Q5VWN6"/>
<dbReference type="OpenTargets" id="ENSG00000108021"/>
<dbReference type="VEuPathDB" id="HostDB:ENSG00000108021"/>
<dbReference type="eggNOG" id="ENOG502RJQA">
    <property type="taxonomic scope" value="Eukaryota"/>
</dbReference>
<dbReference type="GeneTree" id="ENSGT00530000063735"/>
<dbReference type="HOGENOM" id="CLU_000681_0_0_1"/>
<dbReference type="InParanoid" id="Q5VWN6"/>
<dbReference type="OMA" id="VPCYIQI"/>
<dbReference type="OrthoDB" id="5960959at2759"/>
<dbReference type="PAN-GO" id="Q5VWN6">
    <property type="GO annotations" value="1 GO annotation based on evolutionary models"/>
</dbReference>
<dbReference type="PhylomeDB" id="Q5VWN6"/>
<dbReference type="TreeFam" id="TF337844"/>
<dbReference type="PathwayCommons" id="Q5VWN6"/>
<dbReference type="SignaLink" id="Q5VWN6"/>
<dbReference type="BioGRID-ORCS" id="54906">
    <property type="hits" value="22 hits in 1167 CRISPR screens"/>
</dbReference>
<dbReference type="ChiTaRS" id="FAM208B">
    <property type="organism name" value="human"/>
</dbReference>
<dbReference type="GenomeRNAi" id="54906"/>
<dbReference type="Pharos" id="Q5VWN6">
    <property type="development level" value="Tdark"/>
</dbReference>
<dbReference type="PRO" id="PR:Q5VWN6"/>
<dbReference type="Proteomes" id="UP000005640">
    <property type="component" value="Chromosome 10"/>
</dbReference>
<dbReference type="RNAct" id="Q5VWN6">
    <property type="molecule type" value="protein"/>
</dbReference>
<dbReference type="Bgee" id="ENSG00000108021">
    <property type="expression patterns" value="Expressed in secondary oocyte and 206 other cell types or tissues"/>
</dbReference>
<dbReference type="ExpressionAtlas" id="Q5VWN6">
    <property type="expression patterns" value="baseline and differential"/>
</dbReference>
<dbReference type="GO" id="GO:0005829">
    <property type="term" value="C:cytosol"/>
    <property type="evidence" value="ECO:0000314"/>
    <property type="project" value="HPA"/>
</dbReference>
<dbReference type="GO" id="GO:0005654">
    <property type="term" value="C:nucleoplasm"/>
    <property type="evidence" value="ECO:0000314"/>
    <property type="project" value="HPA"/>
</dbReference>
<dbReference type="GO" id="GO:0045814">
    <property type="term" value="P:negative regulation of gene expression, epigenetic"/>
    <property type="evidence" value="ECO:0007669"/>
    <property type="project" value="InterPro"/>
</dbReference>
<dbReference type="InterPro" id="IPR022168">
    <property type="entry name" value="GARIL-like_Rab2B-bd"/>
</dbReference>
<dbReference type="InterPro" id="IPR056242">
    <property type="entry name" value="PIN_TASOR"/>
</dbReference>
<dbReference type="InterPro" id="IPR046432">
    <property type="entry name" value="TASOR"/>
</dbReference>
<dbReference type="InterPro" id="IPR056243">
    <property type="entry name" value="TASOR_ab_dom"/>
</dbReference>
<dbReference type="InterPro" id="IPR022188">
    <property type="entry name" value="TASOR_DUF3715"/>
</dbReference>
<dbReference type="PANTHER" id="PTHR16207:SF10">
    <property type="entry name" value="PROTEIN TASOR 2"/>
    <property type="match status" value="1"/>
</dbReference>
<dbReference type="PANTHER" id="PTHR16207">
    <property type="entry name" value="SET DOMAIN-CONTAINING PROTEIN"/>
    <property type="match status" value="1"/>
</dbReference>
<dbReference type="Pfam" id="PF12509">
    <property type="entry name" value="DUF3715"/>
    <property type="match status" value="2"/>
</dbReference>
<dbReference type="Pfam" id="PF12480">
    <property type="entry name" value="GARIL_Rab2_bd"/>
    <property type="match status" value="1"/>
</dbReference>
<dbReference type="Pfam" id="PF24630">
    <property type="entry name" value="PIN_TASOR"/>
    <property type="match status" value="1"/>
</dbReference>
<dbReference type="Pfam" id="PF23314">
    <property type="entry name" value="TASOR_alpha-beta"/>
    <property type="match status" value="1"/>
</dbReference>
<evidence type="ECO:0000250" key="1">
    <source>
        <dbReference type="UniProtKB" id="Q5DTT3"/>
    </source>
</evidence>
<evidence type="ECO:0000256" key="2">
    <source>
        <dbReference type="SAM" id="MobiDB-lite"/>
    </source>
</evidence>
<evidence type="ECO:0000269" key="3">
    <source>
    </source>
</evidence>
<evidence type="ECO:0000269" key="4">
    <source>
    </source>
</evidence>
<evidence type="ECO:0000269" key="5">
    <source ref="2"/>
</evidence>
<evidence type="ECO:0000303" key="6">
    <source ref="2"/>
</evidence>
<evidence type="ECO:0000305" key="7"/>
<evidence type="ECO:0000312" key="8">
    <source>
        <dbReference type="HGNC" id="HGNC:23484"/>
    </source>
</evidence>
<evidence type="ECO:0007744" key="9">
    <source>
    </source>
</evidence>
<evidence type="ECO:0007744" key="10">
    <source>
    </source>
</evidence>
<evidence type="ECO:0007744" key="11">
    <source>
    </source>
</evidence>
<evidence type="ECO:0007744" key="12">
    <source>
    </source>
</evidence>
<evidence type="ECO:0007744" key="13">
    <source>
    </source>
</evidence>
<accession>Q5VWN6</accession>
<accession>Q2YD91</accession>
<accession>Q5VWN5</accession>
<accession>Q6ZRQ8</accession>
<accession>Q8IVG4</accession>
<accession>Q9BUZ7</accession>
<accession>Q9H5J9</accession>
<accession>Q9H7A4</accession>
<accession>Q9H996</accession>
<accession>Q9NXA1</accession>
<proteinExistence type="evidence at protein level"/>
<organism>
    <name type="scientific">Homo sapiens</name>
    <name type="common">Human</name>
    <dbReference type="NCBI Taxonomy" id="9606"/>
    <lineage>
        <taxon>Eukaryota</taxon>
        <taxon>Metazoa</taxon>
        <taxon>Chordata</taxon>
        <taxon>Craniata</taxon>
        <taxon>Vertebrata</taxon>
        <taxon>Euteleostomi</taxon>
        <taxon>Mammalia</taxon>
        <taxon>Eutheria</taxon>
        <taxon>Euarchontoglires</taxon>
        <taxon>Primates</taxon>
        <taxon>Haplorrhini</taxon>
        <taxon>Catarrhini</taxon>
        <taxon>Hominidae</taxon>
        <taxon>Homo</taxon>
    </lineage>
</organism>
<reference key="1">
    <citation type="journal article" date="2004" name="Nature">
        <title>The DNA sequence and comparative analysis of human chromosome 10.</title>
        <authorList>
            <person name="Deloukas P."/>
            <person name="Earthrowl M.E."/>
            <person name="Grafham D.V."/>
            <person name="Rubenfield M."/>
            <person name="French L."/>
            <person name="Steward C.A."/>
            <person name="Sims S.K."/>
            <person name="Jones M.C."/>
            <person name="Searle S."/>
            <person name="Scott C."/>
            <person name="Howe K."/>
            <person name="Hunt S.E."/>
            <person name="Andrews T.D."/>
            <person name="Gilbert J.G.R."/>
            <person name="Swarbreck D."/>
            <person name="Ashurst J.L."/>
            <person name="Taylor A."/>
            <person name="Battles J."/>
            <person name="Bird C.P."/>
            <person name="Ainscough R."/>
            <person name="Almeida J.P."/>
            <person name="Ashwell R.I.S."/>
            <person name="Ambrose K.D."/>
            <person name="Babbage A.K."/>
            <person name="Bagguley C.L."/>
            <person name="Bailey J."/>
            <person name="Banerjee R."/>
            <person name="Bates K."/>
            <person name="Beasley H."/>
            <person name="Bray-Allen S."/>
            <person name="Brown A.J."/>
            <person name="Brown J.Y."/>
            <person name="Burford D.C."/>
            <person name="Burrill W."/>
            <person name="Burton J."/>
            <person name="Cahill P."/>
            <person name="Camire D."/>
            <person name="Carter N.P."/>
            <person name="Chapman J.C."/>
            <person name="Clark S.Y."/>
            <person name="Clarke G."/>
            <person name="Clee C.M."/>
            <person name="Clegg S."/>
            <person name="Corby N."/>
            <person name="Coulson A."/>
            <person name="Dhami P."/>
            <person name="Dutta I."/>
            <person name="Dunn M."/>
            <person name="Faulkner L."/>
            <person name="Frankish A."/>
            <person name="Frankland J.A."/>
            <person name="Garner P."/>
            <person name="Garnett J."/>
            <person name="Gribble S."/>
            <person name="Griffiths C."/>
            <person name="Grocock R."/>
            <person name="Gustafson E."/>
            <person name="Hammond S."/>
            <person name="Harley J.L."/>
            <person name="Hart E."/>
            <person name="Heath P.D."/>
            <person name="Ho T.P."/>
            <person name="Hopkins B."/>
            <person name="Horne J."/>
            <person name="Howden P.J."/>
            <person name="Huckle E."/>
            <person name="Hynds C."/>
            <person name="Johnson C."/>
            <person name="Johnson D."/>
            <person name="Kana A."/>
            <person name="Kay M."/>
            <person name="Kimberley A.M."/>
            <person name="Kershaw J.K."/>
            <person name="Kokkinaki M."/>
            <person name="Laird G.K."/>
            <person name="Lawlor S."/>
            <person name="Lee H.M."/>
            <person name="Leongamornlert D.A."/>
            <person name="Laird G."/>
            <person name="Lloyd C."/>
            <person name="Lloyd D.M."/>
            <person name="Loveland J."/>
            <person name="Lovell J."/>
            <person name="McLaren S."/>
            <person name="McLay K.E."/>
            <person name="McMurray A."/>
            <person name="Mashreghi-Mohammadi M."/>
            <person name="Matthews L."/>
            <person name="Milne S."/>
            <person name="Nickerson T."/>
            <person name="Nguyen M."/>
            <person name="Overton-Larty E."/>
            <person name="Palmer S.A."/>
            <person name="Pearce A.V."/>
            <person name="Peck A.I."/>
            <person name="Pelan S."/>
            <person name="Phillimore B."/>
            <person name="Porter K."/>
            <person name="Rice C.M."/>
            <person name="Rogosin A."/>
            <person name="Ross M.T."/>
            <person name="Sarafidou T."/>
            <person name="Sehra H.K."/>
            <person name="Shownkeen R."/>
            <person name="Skuce C.D."/>
            <person name="Smith M."/>
            <person name="Standring L."/>
            <person name="Sycamore N."/>
            <person name="Tester J."/>
            <person name="Thorpe A."/>
            <person name="Torcasso W."/>
            <person name="Tracey A."/>
            <person name="Tromans A."/>
            <person name="Tsolas J."/>
            <person name="Wall M."/>
            <person name="Walsh J."/>
            <person name="Wang H."/>
            <person name="Weinstock K."/>
            <person name="West A.P."/>
            <person name="Willey D.L."/>
            <person name="Whitehead S.L."/>
            <person name="Wilming L."/>
            <person name="Wray P.W."/>
            <person name="Young L."/>
            <person name="Chen Y."/>
            <person name="Lovering R.C."/>
            <person name="Moschonas N.K."/>
            <person name="Siebert R."/>
            <person name="Fechtel K."/>
            <person name="Bentley D."/>
            <person name="Durbin R.M."/>
            <person name="Hubbard T."/>
            <person name="Doucette-Stamm L."/>
            <person name="Beck S."/>
            <person name="Smith D.R."/>
            <person name="Rogers J."/>
        </authorList>
    </citation>
    <scope>NUCLEOTIDE SEQUENCE [LARGE SCALE GENOMIC DNA]</scope>
</reference>
<reference key="2">
    <citation type="submission" date="2002-11" db="EMBL/GenBank/DDBJ databases">
        <title>The nucleotide sequence of a long cDNA clone isolated from human.</title>
        <authorList>
            <person name="Nagase T."/>
            <person name="Kikuno R."/>
            <person name="Ohara O."/>
        </authorList>
    </citation>
    <scope>NUCLEOTIDE SEQUENCE [LARGE SCALE MRNA] OF 259-2430 (ISOFORM 2)</scope>
    <scope>VARIANTS PRO-1075; ALA-1679 AND ASN-2404</scope>
    <source>
        <tissue>Brain</tissue>
    </source>
</reference>
<reference key="3">
    <citation type="journal article" date="2004" name="Nat. Genet.">
        <title>Complete sequencing and characterization of 21,243 full-length human cDNAs.</title>
        <authorList>
            <person name="Ota T."/>
            <person name="Suzuki Y."/>
            <person name="Nishikawa T."/>
            <person name="Otsuki T."/>
            <person name="Sugiyama T."/>
            <person name="Irie R."/>
            <person name="Wakamatsu A."/>
            <person name="Hayashi K."/>
            <person name="Sato H."/>
            <person name="Nagai K."/>
            <person name="Kimura K."/>
            <person name="Makita H."/>
            <person name="Sekine M."/>
            <person name="Obayashi M."/>
            <person name="Nishi T."/>
            <person name="Shibahara T."/>
            <person name="Tanaka T."/>
            <person name="Ishii S."/>
            <person name="Yamamoto J."/>
            <person name="Saito K."/>
            <person name="Kawai Y."/>
            <person name="Isono Y."/>
            <person name="Nakamura Y."/>
            <person name="Nagahari K."/>
            <person name="Murakami K."/>
            <person name="Yasuda T."/>
            <person name="Iwayanagi T."/>
            <person name="Wagatsuma M."/>
            <person name="Shiratori A."/>
            <person name="Sudo H."/>
            <person name="Hosoiri T."/>
            <person name="Kaku Y."/>
            <person name="Kodaira H."/>
            <person name="Kondo H."/>
            <person name="Sugawara M."/>
            <person name="Takahashi M."/>
            <person name="Kanda K."/>
            <person name="Yokoi T."/>
            <person name="Furuya T."/>
            <person name="Kikkawa E."/>
            <person name="Omura Y."/>
            <person name="Abe K."/>
            <person name="Kamihara K."/>
            <person name="Katsuta N."/>
            <person name="Sato K."/>
            <person name="Tanikawa M."/>
            <person name="Yamazaki M."/>
            <person name="Ninomiya K."/>
            <person name="Ishibashi T."/>
            <person name="Yamashita H."/>
            <person name="Murakawa K."/>
            <person name="Fujimori K."/>
            <person name="Tanai H."/>
            <person name="Kimata M."/>
            <person name="Watanabe M."/>
            <person name="Hiraoka S."/>
            <person name="Chiba Y."/>
            <person name="Ishida S."/>
            <person name="Ono Y."/>
            <person name="Takiguchi S."/>
            <person name="Watanabe S."/>
            <person name="Yosida M."/>
            <person name="Hotuta T."/>
            <person name="Kusano J."/>
            <person name="Kanehori K."/>
            <person name="Takahashi-Fujii A."/>
            <person name="Hara H."/>
            <person name="Tanase T.-O."/>
            <person name="Nomura Y."/>
            <person name="Togiya S."/>
            <person name="Komai F."/>
            <person name="Hara R."/>
            <person name="Takeuchi K."/>
            <person name="Arita M."/>
            <person name="Imose N."/>
            <person name="Musashino K."/>
            <person name="Yuuki H."/>
            <person name="Oshima A."/>
            <person name="Sasaki N."/>
            <person name="Aotsuka S."/>
            <person name="Yoshikawa Y."/>
            <person name="Matsunawa H."/>
            <person name="Ichihara T."/>
            <person name="Shiohata N."/>
            <person name="Sano S."/>
            <person name="Moriya S."/>
            <person name="Momiyama H."/>
            <person name="Satoh N."/>
            <person name="Takami S."/>
            <person name="Terashima Y."/>
            <person name="Suzuki O."/>
            <person name="Nakagawa S."/>
            <person name="Senoh A."/>
            <person name="Mizoguchi H."/>
            <person name="Goto Y."/>
            <person name="Shimizu F."/>
            <person name="Wakebe H."/>
            <person name="Hishigaki H."/>
            <person name="Watanabe T."/>
            <person name="Sugiyama A."/>
            <person name="Takemoto M."/>
            <person name="Kawakami B."/>
            <person name="Yamazaki M."/>
            <person name="Watanabe K."/>
            <person name="Kumagai A."/>
            <person name="Itakura S."/>
            <person name="Fukuzumi Y."/>
            <person name="Fujimori Y."/>
            <person name="Komiyama M."/>
            <person name="Tashiro H."/>
            <person name="Tanigami A."/>
            <person name="Fujiwara T."/>
            <person name="Ono T."/>
            <person name="Yamada K."/>
            <person name="Fujii Y."/>
            <person name="Ozaki K."/>
            <person name="Hirao M."/>
            <person name="Ohmori Y."/>
            <person name="Kawabata A."/>
            <person name="Hikiji T."/>
            <person name="Kobatake N."/>
            <person name="Inagaki H."/>
            <person name="Ikema Y."/>
            <person name="Okamoto S."/>
            <person name="Okitani R."/>
            <person name="Kawakami T."/>
            <person name="Noguchi S."/>
            <person name="Itoh T."/>
            <person name="Shigeta K."/>
            <person name="Senba T."/>
            <person name="Matsumura K."/>
            <person name="Nakajima Y."/>
            <person name="Mizuno T."/>
            <person name="Morinaga M."/>
            <person name="Sasaki M."/>
            <person name="Togashi T."/>
            <person name="Oyama M."/>
            <person name="Hata H."/>
            <person name="Watanabe M."/>
            <person name="Komatsu T."/>
            <person name="Mizushima-Sugano J."/>
            <person name="Satoh T."/>
            <person name="Shirai Y."/>
            <person name="Takahashi Y."/>
            <person name="Nakagawa K."/>
            <person name="Okumura K."/>
            <person name="Nagase T."/>
            <person name="Nomura N."/>
            <person name="Kikuchi H."/>
            <person name="Masuho Y."/>
            <person name="Yamashita R."/>
            <person name="Nakai K."/>
            <person name="Yada T."/>
            <person name="Nakamura Y."/>
            <person name="Ohara O."/>
            <person name="Isogai T."/>
            <person name="Sugano S."/>
        </authorList>
    </citation>
    <scope>NUCLEOTIDE SEQUENCE [LARGE SCALE MRNA] OF 701-2430</scope>
    <scope>VARIANTS ALA-1679 AND ASN-2404</scope>
    <source>
        <tissue>Testis</tissue>
    </source>
</reference>
<reference key="4">
    <citation type="journal article" date="2004" name="Genome Res.">
        <title>The status, quality, and expansion of the NIH full-length cDNA project: the Mammalian Gene Collection (MGC).</title>
        <authorList>
            <consortium name="The MGC Project Team"/>
        </authorList>
    </citation>
    <scope>NUCLEOTIDE SEQUENCE [LARGE SCALE MRNA] OF 1662-2430</scope>
    <scope>VARIANTS ALA-1679 AND ASN-2404</scope>
    <source>
        <tissue>Blood</tissue>
        <tissue>Eye</tissue>
    </source>
</reference>
<reference key="5">
    <citation type="journal article" date="2008" name="Proc. Natl. Acad. Sci. U.S.A.">
        <title>A quantitative atlas of mitotic phosphorylation.</title>
        <authorList>
            <person name="Dephoure N."/>
            <person name="Zhou C."/>
            <person name="Villen J."/>
            <person name="Beausoleil S.A."/>
            <person name="Bakalarski C.E."/>
            <person name="Elledge S.J."/>
            <person name="Gygi S.P."/>
        </authorList>
    </citation>
    <scope>PHOSPHORYLATION [LARGE SCALE ANALYSIS] AT SER-384 AND SER-2037</scope>
    <scope>IDENTIFICATION BY MASS SPECTROMETRY [LARGE SCALE ANALYSIS]</scope>
    <source>
        <tissue>Cervix carcinoma</tissue>
    </source>
</reference>
<reference key="6">
    <citation type="journal article" date="2009" name="Anal. Chem.">
        <title>Lys-N and trypsin cover complementary parts of the phosphoproteome in a refined SCX-based approach.</title>
        <authorList>
            <person name="Gauci S."/>
            <person name="Helbig A.O."/>
            <person name="Slijper M."/>
            <person name="Krijgsveld J."/>
            <person name="Heck A.J."/>
            <person name="Mohammed S."/>
        </authorList>
    </citation>
    <scope>IDENTIFICATION BY MASS SPECTROMETRY [LARGE SCALE ANALYSIS]</scope>
</reference>
<reference key="7">
    <citation type="journal article" date="2009" name="Sci. Signal.">
        <title>Quantitative phosphoproteomic analysis of T cell receptor signaling reveals system-wide modulation of protein-protein interactions.</title>
        <authorList>
            <person name="Mayya V."/>
            <person name="Lundgren D.H."/>
            <person name="Hwang S.-I."/>
            <person name="Rezaul K."/>
            <person name="Wu L."/>
            <person name="Eng J.K."/>
            <person name="Rodionov V."/>
            <person name="Han D.K."/>
        </authorList>
    </citation>
    <scope>IDENTIFICATION BY MASS SPECTROMETRY [LARGE SCALE ANALYSIS]</scope>
    <source>
        <tissue>Leukemic T-cell</tissue>
    </source>
</reference>
<reference key="8">
    <citation type="journal article" date="2010" name="Sci. Signal.">
        <title>Quantitative phosphoproteomics reveals widespread full phosphorylation site occupancy during mitosis.</title>
        <authorList>
            <person name="Olsen J.V."/>
            <person name="Vermeulen M."/>
            <person name="Santamaria A."/>
            <person name="Kumar C."/>
            <person name="Miller M.L."/>
            <person name="Jensen L.J."/>
            <person name="Gnad F."/>
            <person name="Cox J."/>
            <person name="Jensen T.S."/>
            <person name="Nigg E.A."/>
            <person name="Brunak S."/>
            <person name="Mann M."/>
        </authorList>
    </citation>
    <scope>PHOSPHORYLATION [LARGE SCALE ANALYSIS] AT SER-19; SER-1087 AND SER-2009</scope>
    <scope>IDENTIFICATION BY MASS SPECTROMETRY [LARGE SCALE ANALYSIS]</scope>
    <source>
        <tissue>Cervix carcinoma</tissue>
    </source>
</reference>
<reference key="9">
    <citation type="journal article" date="2011" name="Sci. Signal.">
        <title>System-wide temporal characterization of the proteome and phosphoproteome of human embryonic stem cell differentiation.</title>
        <authorList>
            <person name="Rigbolt K.T."/>
            <person name="Prokhorova T.A."/>
            <person name="Akimov V."/>
            <person name="Henningsen J."/>
            <person name="Johansen P.T."/>
            <person name="Kratchmarova I."/>
            <person name="Kassem M."/>
            <person name="Mann M."/>
            <person name="Olsen J.V."/>
            <person name="Blagoev B."/>
        </authorList>
    </citation>
    <scope>IDENTIFICATION BY MASS SPECTROMETRY [LARGE SCALE ANALYSIS]</scope>
</reference>
<reference key="10">
    <citation type="journal article" date="2013" name="J. Proteome Res.">
        <title>Toward a comprehensive characterization of a human cancer cell phosphoproteome.</title>
        <authorList>
            <person name="Zhou H."/>
            <person name="Di Palma S."/>
            <person name="Preisinger C."/>
            <person name="Peng M."/>
            <person name="Polat A.N."/>
            <person name="Heck A.J."/>
            <person name="Mohammed S."/>
        </authorList>
    </citation>
    <scope>PHOSPHORYLATION [LARGE SCALE ANALYSIS] AT SER-219; SER-685; SER-1087; SER-1172; SER-1541; SER-1848; SER-2009; SER-2037 AND SER-2066</scope>
    <scope>IDENTIFICATION BY MASS SPECTROMETRY [LARGE SCALE ANALYSIS]</scope>
    <source>
        <tissue>Cervix carcinoma</tissue>
        <tissue>Erythroleukemia</tissue>
    </source>
</reference>
<reference key="11">
    <citation type="journal article" date="2014" name="J. Proteomics">
        <title>An enzyme assisted RP-RPLC approach for in-depth analysis of human liver phosphoproteome.</title>
        <authorList>
            <person name="Bian Y."/>
            <person name="Song C."/>
            <person name="Cheng K."/>
            <person name="Dong M."/>
            <person name="Wang F."/>
            <person name="Huang J."/>
            <person name="Sun D."/>
            <person name="Wang L."/>
            <person name="Ye M."/>
            <person name="Zou H."/>
        </authorList>
    </citation>
    <scope>PHOSPHORYLATION [LARGE SCALE ANALYSIS] AT SER-1025</scope>
    <scope>IDENTIFICATION BY MASS SPECTROMETRY [LARGE SCALE ANALYSIS]</scope>
    <source>
        <tissue>Liver</tissue>
    </source>
</reference>
<reference key="12">
    <citation type="journal article" date="2017" name="Nat. Struct. Mol. Biol.">
        <title>Site-specific mapping of the human SUMO proteome reveals co-modification with phosphorylation.</title>
        <authorList>
            <person name="Hendriks I.A."/>
            <person name="Lyon D."/>
            <person name="Young C."/>
            <person name="Jensen L.J."/>
            <person name="Vertegaal A.C."/>
            <person name="Nielsen M.L."/>
        </authorList>
    </citation>
    <scope>SUMOYLATION [LARGE SCALE ANALYSIS] AT LYS-2007</scope>
    <scope>IDENTIFICATION BY MASS SPECTROMETRY [LARGE SCALE ANALYSIS]</scope>
</reference>